<sequence>MSRSLKKGAYADPSLLKKVEAANASVSKKPIKTWSRRSQIFPNFVGLTFEVHNGKTFLKVYVTEDMIGHKLGEFAPTRNFKNHTEAKR</sequence>
<protein>
    <recommendedName>
        <fullName evidence="1">Small ribosomal subunit protein uS19</fullName>
    </recommendedName>
    <alternativeName>
        <fullName evidence="2">30S ribosomal protein S19</fullName>
    </alternativeName>
</protein>
<proteinExistence type="inferred from homology"/>
<name>RS19_UREPA</name>
<organism>
    <name type="scientific">Ureaplasma parvum serovar 3 (strain ATCC 700970)</name>
    <dbReference type="NCBI Taxonomy" id="273119"/>
    <lineage>
        <taxon>Bacteria</taxon>
        <taxon>Bacillati</taxon>
        <taxon>Mycoplasmatota</taxon>
        <taxon>Mycoplasmoidales</taxon>
        <taxon>Mycoplasmoidaceae</taxon>
        <taxon>Ureaplasma</taxon>
    </lineage>
</organism>
<evidence type="ECO:0000255" key="1">
    <source>
        <dbReference type="HAMAP-Rule" id="MF_00531"/>
    </source>
</evidence>
<evidence type="ECO:0000305" key="2"/>
<accession>Q9PQQ6</accession>
<comment type="function">
    <text evidence="1">Protein S19 forms a complex with S13 that binds strongly to the 16S ribosomal RNA.</text>
</comment>
<comment type="similarity">
    <text evidence="1">Belongs to the universal ribosomal protein uS19 family.</text>
</comment>
<feature type="chain" id="PRO_0000129935" description="Small ribosomal subunit protein uS19">
    <location>
        <begin position="1"/>
        <end position="88"/>
    </location>
</feature>
<reference key="1">
    <citation type="journal article" date="2000" name="Nature">
        <title>The complete sequence of the mucosal pathogen Ureaplasma urealyticum.</title>
        <authorList>
            <person name="Glass J.I."/>
            <person name="Lefkowitz E.J."/>
            <person name="Glass J.S."/>
            <person name="Heiner C.R."/>
            <person name="Chen E.Y."/>
            <person name="Cassell G.H."/>
        </authorList>
    </citation>
    <scope>NUCLEOTIDE SEQUENCE [LARGE SCALE GENOMIC DNA]</scope>
    <source>
        <strain>ATCC 700970</strain>
    </source>
</reference>
<gene>
    <name evidence="1" type="primary">rpsS</name>
    <name evidence="1" type="synonym">rps19</name>
    <name type="ordered locus">UU235</name>
</gene>
<keyword id="KW-1185">Reference proteome</keyword>
<keyword id="KW-0687">Ribonucleoprotein</keyword>
<keyword id="KW-0689">Ribosomal protein</keyword>
<keyword id="KW-0694">RNA-binding</keyword>
<keyword id="KW-0699">rRNA-binding</keyword>
<dbReference type="EMBL" id="AF222894">
    <property type="protein sequence ID" value="AAF30644.1"/>
    <property type="molecule type" value="Genomic_DNA"/>
</dbReference>
<dbReference type="RefSeq" id="WP_004025915.1">
    <property type="nucleotide sequence ID" value="NC_002162.1"/>
</dbReference>
<dbReference type="SMR" id="Q9PQQ6"/>
<dbReference type="STRING" id="273119.UU235"/>
<dbReference type="EnsemblBacteria" id="AAF30644">
    <property type="protein sequence ID" value="AAF30644"/>
    <property type="gene ID" value="UU235"/>
</dbReference>
<dbReference type="GeneID" id="93848710"/>
<dbReference type="KEGG" id="uur:UU235"/>
<dbReference type="eggNOG" id="COG0185">
    <property type="taxonomic scope" value="Bacteria"/>
</dbReference>
<dbReference type="HOGENOM" id="CLU_144911_0_1_14"/>
<dbReference type="OrthoDB" id="9797833at2"/>
<dbReference type="Proteomes" id="UP000000423">
    <property type="component" value="Chromosome"/>
</dbReference>
<dbReference type="GO" id="GO:0005737">
    <property type="term" value="C:cytoplasm"/>
    <property type="evidence" value="ECO:0007669"/>
    <property type="project" value="UniProtKB-ARBA"/>
</dbReference>
<dbReference type="GO" id="GO:0015935">
    <property type="term" value="C:small ribosomal subunit"/>
    <property type="evidence" value="ECO:0007669"/>
    <property type="project" value="InterPro"/>
</dbReference>
<dbReference type="GO" id="GO:0019843">
    <property type="term" value="F:rRNA binding"/>
    <property type="evidence" value="ECO:0007669"/>
    <property type="project" value="UniProtKB-UniRule"/>
</dbReference>
<dbReference type="GO" id="GO:0003735">
    <property type="term" value="F:structural constituent of ribosome"/>
    <property type="evidence" value="ECO:0007669"/>
    <property type="project" value="InterPro"/>
</dbReference>
<dbReference type="GO" id="GO:0000028">
    <property type="term" value="P:ribosomal small subunit assembly"/>
    <property type="evidence" value="ECO:0007669"/>
    <property type="project" value="TreeGrafter"/>
</dbReference>
<dbReference type="GO" id="GO:0006412">
    <property type="term" value="P:translation"/>
    <property type="evidence" value="ECO:0007669"/>
    <property type="project" value="UniProtKB-UniRule"/>
</dbReference>
<dbReference type="FunFam" id="3.30.860.10:FF:000001">
    <property type="entry name" value="30S ribosomal protein S19"/>
    <property type="match status" value="1"/>
</dbReference>
<dbReference type="Gene3D" id="3.30.860.10">
    <property type="entry name" value="30s Ribosomal Protein S19, Chain A"/>
    <property type="match status" value="1"/>
</dbReference>
<dbReference type="HAMAP" id="MF_00531">
    <property type="entry name" value="Ribosomal_uS19"/>
    <property type="match status" value="1"/>
</dbReference>
<dbReference type="InterPro" id="IPR002222">
    <property type="entry name" value="Ribosomal_uS19"/>
</dbReference>
<dbReference type="InterPro" id="IPR005732">
    <property type="entry name" value="Ribosomal_uS19_bac-type"/>
</dbReference>
<dbReference type="InterPro" id="IPR020934">
    <property type="entry name" value="Ribosomal_uS19_CS"/>
</dbReference>
<dbReference type="InterPro" id="IPR023575">
    <property type="entry name" value="Ribosomal_uS19_SF"/>
</dbReference>
<dbReference type="NCBIfam" id="TIGR01050">
    <property type="entry name" value="rpsS_bact"/>
    <property type="match status" value="1"/>
</dbReference>
<dbReference type="PANTHER" id="PTHR11880">
    <property type="entry name" value="RIBOSOMAL PROTEIN S19P FAMILY MEMBER"/>
    <property type="match status" value="1"/>
</dbReference>
<dbReference type="PANTHER" id="PTHR11880:SF8">
    <property type="entry name" value="SMALL RIBOSOMAL SUBUNIT PROTEIN US19M"/>
    <property type="match status" value="1"/>
</dbReference>
<dbReference type="Pfam" id="PF00203">
    <property type="entry name" value="Ribosomal_S19"/>
    <property type="match status" value="1"/>
</dbReference>
<dbReference type="PIRSF" id="PIRSF002144">
    <property type="entry name" value="Ribosomal_S19"/>
    <property type="match status" value="1"/>
</dbReference>
<dbReference type="PRINTS" id="PR00975">
    <property type="entry name" value="RIBOSOMALS19"/>
</dbReference>
<dbReference type="SUPFAM" id="SSF54570">
    <property type="entry name" value="Ribosomal protein S19"/>
    <property type="match status" value="1"/>
</dbReference>
<dbReference type="PROSITE" id="PS00323">
    <property type="entry name" value="RIBOSOMAL_S19"/>
    <property type="match status" value="1"/>
</dbReference>